<protein>
    <recommendedName>
        <fullName evidence="1">Phospho-N-acetylmuramoyl-pentapeptide-transferase</fullName>
        <ecNumber evidence="1">2.7.8.13</ecNumber>
    </recommendedName>
    <alternativeName>
        <fullName evidence="1">UDP-MurNAc-pentapeptide phosphotransferase</fullName>
    </alternativeName>
</protein>
<keyword id="KW-0131">Cell cycle</keyword>
<keyword id="KW-0132">Cell division</keyword>
<keyword id="KW-0997">Cell inner membrane</keyword>
<keyword id="KW-1003">Cell membrane</keyword>
<keyword id="KW-0133">Cell shape</keyword>
<keyword id="KW-0961">Cell wall biogenesis/degradation</keyword>
<keyword id="KW-0460">Magnesium</keyword>
<keyword id="KW-0472">Membrane</keyword>
<keyword id="KW-0479">Metal-binding</keyword>
<keyword id="KW-0573">Peptidoglycan synthesis</keyword>
<keyword id="KW-1185">Reference proteome</keyword>
<keyword id="KW-0808">Transferase</keyword>
<keyword id="KW-0812">Transmembrane</keyword>
<keyword id="KW-1133">Transmembrane helix</keyword>
<feature type="chain" id="PRO_0000108843" description="Phospho-N-acetylmuramoyl-pentapeptide-transferase">
    <location>
        <begin position="1"/>
        <end position="361"/>
    </location>
</feature>
<feature type="transmembrane region" description="Helical" evidence="1">
    <location>
        <begin position="27"/>
        <end position="47"/>
    </location>
</feature>
<feature type="transmembrane region" description="Helical" evidence="1">
    <location>
        <begin position="70"/>
        <end position="90"/>
    </location>
</feature>
<feature type="transmembrane region" description="Helical" evidence="1">
    <location>
        <begin position="97"/>
        <end position="117"/>
    </location>
</feature>
<feature type="transmembrane region" description="Helical" evidence="1">
    <location>
        <begin position="134"/>
        <end position="154"/>
    </location>
</feature>
<feature type="transmembrane region" description="Helical" evidence="1">
    <location>
        <begin position="167"/>
        <end position="187"/>
    </location>
</feature>
<feature type="transmembrane region" description="Helical" evidence="1">
    <location>
        <begin position="199"/>
        <end position="219"/>
    </location>
</feature>
<feature type="transmembrane region" description="Helical" evidence="1">
    <location>
        <begin position="236"/>
        <end position="256"/>
    </location>
</feature>
<feature type="transmembrane region" description="Helical" evidence="1">
    <location>
        <begin position="263"/>
        <end position="283"/>
    </location>
</feature>
<feature type="transmembrane region" description="Helical" evidence="1">
    <location>
        <begin position="288"/>
        <end position="308"/>
    </location>
</feature>
<feature type="transmembrane region" description="Helical" evidence="1">
    <location>
        <begin position="338"/>
        <end position="358"/>
    </location>
</feature>
<reference key="1">
    <citation type="journal article" date="2004" name="Science">
        <title>The genomic sequence of the accidental pathogen Legionella pneumophila.</title>
        <authorList>
            <person name="Chien M."/>
            <person name="Morozova I."/>
            <person name="Shi S."/>
            <person name="Sheng H."/>
            <person name="Chen J."/>
            <person name="Gomez S.M."/>
            <person name="Asamani G."/>
            <person name="Hill K."/>
            <person name="Nuara J."/>
            <person name="Feder M."/>
            <person name="Rineer J."/>
            <person name="Greenberg J.J."/>
            <person name="Steshenko V."/>
            <person name="Park S.H."/>
            <person name="Zhao B."/>
            <person name="Teplitskaya E."/>
            <person name="Edwards J.R."/>
            <person name="Pampou S."/>
            <person name="Georghiou A."/>
            <person name="Chou I.-C."/>
            <person name="Iannuccilli W."/>
            <person name="Ulz M.E."/>
            <person name="Kim D.H."/>
            <person name="Geringer-Sameth A."/>
            <person name="Goldsberry C."/>
            <person name="Morozov P."/>
            <person name="Fischer S.G."/>
            <person name="Segal G."/>
            <person name="Qu X."/>
            <person name="Rzhetsky A."/>
            <person name="Zhang P."/>
            <person name="Cayanis E."/>
            <person name="De Jong P.J."/>
            <person name="Ju J."/>
            <person name="Kalachikov S."/>
            <person name="Shuman H.A."/>
            <person name="Russo J.J."/>
        </authorList>
    </citation>
    <scope>NUCLEOTIDE SEQUENCE [LARGE SCALE GENOMIC DNA]</scope>
    <source>
        <strain>Philadelphia 1 / ATCC 33152 / DSM 7513</strain>
    </source>
</reference>
<name>MRAY_LEGPH</name>
<organism>
    <name type="scientific">Legionella pneumophila subsp. pneumophila (strain Philadelphia 1 / ATCC 33152 / DSM 7513)</name>
    <dbReference type="NCBI Taxonomy" id="272624"/>
    <lineage>
        <taxon>Bacteria</taxon>
        <taxon>Pseudomonadati</taxon>
        <taxon>Pseudomonadota</taxon>
        <taxon>Gammaproteobacteria</taxon>
        <taxon>Legionellales</taxon>
        <taxon>Legionellaceae</taxon>
        <taxon>Legionella</taxon>
    </lineage>
</organism>
<dbReference type="EC" id="2.7.8.13" evidence="1"/>
<dbReference type="EMBL" id="AE017354">
    <property type="protein sequence ID" value="AAU28675.1"/>
    <property type="status" value="ALT_INIT"/>
    <property type="molecule type" value="Genomic_DNA"/>
</dbReference>
<dbReference type="RefSeq" id="WP_014842671.1">
    <property type="nucleotide sequence ID" value="NC_002942.5"/>
</dbReference>
<dbReference type="RefSeq" id="YP_096622.1">
    <property type="nucleotide sequence ID" value="NC_002942.5"/>
</dbReference>
<dbReference type="SMR" id="Q5ZSA2"/>
<dbReference type="STRING" id="272624.lpg2617"/>
<dbReference type="PaxDb" id="272624-lpg2617"/>
<dbReference type="GeneID" id="57036616"/>
<dbReference type="KEGG" id="lpn:lpg2617"/>
<dbReference type="PATRIC" id="fig|272624.6.peg.2792"/>
<dbReference type="eggNOG" id="COG0472">
    <property type="taxonomic scope" value="Bacteria"/>
</dbReference>
<dbReference type="HOGENOM" id="CLU_023982_0_0_6"/>
<dbReference type="OrthoDB" id="9805475at2"/>
<dbReference type="UniPathway" id="UPA00219"/>
<dbReference type="Proteomes" id="UP000000609">
    <property type="component" value="Chromosome"/>
</dbReference>
<dbReference type="GO" id="GO:0005886">
    <property type="term" value="C:plasma membrane"/>
    <property type="evidence" value="ECO:0007669"/>
    <property type="project" value="UniProtKB-SubCell"/>
</dbReference>
<dbReference type="GO" id="GO:0046872">
    <property type="term" value="F:metal ion binding"/>
    <property type="evidence" value="ECO:0007669"/>
    <property type="project" value="UniProtKB-KW"/>
</dbReference>
<dbReference type="GO" id="GO:0008963">
    <property type="term" value="F:phospho-N-acetylmuramoyl-pentapeptide-transferase activity"/>
    <property type="evidence" value="ECO:0007669"/>
    <property type="project" value="UniProtKB-UniRule"/>
</dbReference>
<dbReference type="GO" id="GO:0051992">
    <property type="term" value="F:UDP-N-acetylmuramoyl-L-alanyl-D-glutamyl-meso-2,6-diaminopimelyl-D-alanyl-D-alanine:undecaprenyl-phosphate transferase activity"/>
    <property type="evidence" value="ECO:0007669"/>
    <property type="project" value="RHEA"/>
</dbReference>
<dbReference type="GO" id="GO:0051301">
    <property type="term" value="P:cell division"/>
    <property type="evidence" value="ECO:0007669"/>
    <property type="project" value="UniProtKB-KW"/>
</dbReference>
<dbReference type="GO" id="GO:0071555">
    <property type="term" value="P:cell wall organization"/>
    <property type="evidence" value="ECO:0007669"/>
    <property type="project" value="UniProtKB-KW"/>
</dbReference>
<dbReference type="GO" id="GO:0009252">
    <property type="term" value="P:peptidoglycan biosynthetic process"/>
    <property type="evidence" value="ECO:0007669"/>
    <property type="project" value="UniProtKB-UniRule"/>
</dbReference>
<dbReference type="GO" id="GO:0008360">
    <property type="term" value="P:regulation of cell shape"/>
    <property type="evidence" value="ECO:0007669"/>
    <property type="project" value="UniProtKB-KW"/>
</dbReference>
<dbReference type="CDD" id="cd06852">
    <property type="entry name" value="GT_MraY"/>
    <property type="match status" value="1"/>
</dbReference>
<dbReference type="HAMAP" id="MF_00038">
    <property type="entry name" value="MraY"/>
    <property type="match status" value="1"/>
</dbReference>
<dbReference type="InterPro" id="IPR000715">
    <property type="entry name" value="Glycosyl_transferase_4"/>
</dbReference>
<dbReference type="InterPro" id="IPR003524">
    <property type="entry name" value="PNAcMuramoyl-5peptid_Trfase"/>
</dbReference>
<dbReference type="InterPro" id="IPR018480">
    <property type="entry name" value="PNAcMuramoyl-5peptid_Trfase_CS"/>
</dbReference>
<dbReference type="NCBIfam" id="TIGR00445">
    <property type="entry name" value="mraY"/>
    <property type="match status" value="1"/>
</dbReference>
<dbReference type="PANTHER" id="PTHR22926">
    <property type="entry name" value="PHOSPHO-N-ACETYLMURAMOYL-PENTAPEPTIDE-TRANSFERASE"/>
    <property type="match status" value="1"/>
</dbReference>
<dbReference type="PANTHER" id="PTHR22926:SF5">
    <property type="entry name" value="PHOSPHO-N-ACETYLMURAMOYL-PENTAPEPTIDE-TRANSFERASE HOMOLOG"/>
    <property type="match status" value="1"/>
</dbReference>
<dbReference type="Pfam" id="PF00953">
    <property type="entry name" value="Glycos_transf_4"/>
    <property type="match status" value="1"/>
</dbReference>
<dbReference type="Pfam" id="PF10555">
    <property type="entry name" value="MraY_sig1"/>
    <property type="match status" value="1"/>
</dbReference>
<dbReference type="PROSITE" id="PS01347">
    <property type="entry name" value="MRAY_1"/>
    <property type="match status" value="1"/>
</dbReference>
<dbReference type="PROSITE" id="PS01348">
    <property type="entry name" value="MRAY_2"/>
    <property type="match status" value="1"/>
</dbReference>
<accession>Q5ZSA2</accession>
<proteinExistence type="inferred from homology"/>
<gene>
    <name evidence="1" type="primary">mraY</name>
    <name type="ordered locus">lpg2617</name>
</gene>
<evidence type="ECO:0000255" key="1">
    <source>
        <dbReference type="HAMAP-Rule" id="MF_00038"/>
    </source>
</evidence>
<evidence type="ECO:0000305" key="2"/>
<sequence length="361" mass="39854">MLYWLTQLLQGQYHAFRVFQYLTFRSILASLTALIVGLLCGPLMIRWLRGLQIGQMVRSDGPQTHLSKAGTPTMGGVLILLAITVSCLLWCDLRQTSLWLVLLVTLANGLVGWVDDYRKLVLKNSKGLPGRWKYFWQSVIALVAVSYLYWNASLPVHTQLTVPFFKTVTWDLGVFFPVLAYFVIVGSSNAVNLTDGLDGLAIMPIVMVAGALGVFAYASSNAVYSNYLGIPYVPNTGELTIFCSSIVGAGLGFLWYNSYPAQVFMGDVGSLALGAALGIVAVVVRQELVLLIMGGLFVIETLSVILQVGYFKYSGGKRLFRMAPLHHHFELKGWSEPKVIVRFWIITVVFVLCGLATLKLR</sequence>
<comment type="function">
    <text evidence="1">Catalyzes the initial step of the lipid cycle reactions in the biosynthesis of the cell wall peptidoglycan: transfers peptidoglycan precursor phospho-MurNAc-pentapeptide from UDP-MurNAc-pentapeptide onto the lipid carrier undecaprenyl phosphate, yielding undecaprenyl-pyrophosphoryl-MurNAc-pentapeptide, known as lipid I.</text>
</comment>
<comment type="catalytic activity">
    <reaction evidence="1">
        <text>UDP-N-acetyl-alpha-D-muramoyl-L-alanyl-gamma-D-glutamyl-meso-2,6-diaminopimeloyl-D-alanyl-D-alanine + di-trans,octa-cis-undecaprenyl phosphate = di-trans,octa-cis-undecaprenyl diphospho-N-acetyl-alpha-D-muramoyl-L-alanyl-D-glutamyl-meso-2,6-diaminopimeloyl-D-alanyl-D-alanine + UMP</text>
        <dbReference type="Rhea" id="RHEA:28386"/>
        <dbReference type="ChEBI" id="CHEBI:57865"/>
        <dbReference type="ChEBI" id="CHEBI:60392"/>
        <dbReference type="ChEBI" id="CHEBI:61386"/>
        <dbReference type="ChEBI" id="CHEBI:61387"/>
        <dbReference type="EC" id="2.7.8.13"/>
    </reaction>
</comment>
<comment type="cofactor">
    <cofactor evidence="1">
        <name>Mg(2+)</name>
        <dbReference type="ChEBI" id="CHEBI:18420"/>
    </cofactor>
</comment>
<comment type="pathway">
    <text evidence="1">Cell wall biogenesis; peptidoglycan biosynthesis.</text>
</comment>
<comment type="subcellular location">
    <subcellularLocation>
        <location evidence="1">Cell inner membrane</location>
        <topology evidence="1">Multi-pass membrane protein</topology>
    </subcellularLocation>
</comment>
<comment type="similarity">
    <text evidence="1">Belongs to the glycosyltransferase 4 family. MraY subfamily.</text>
</comment>
<comment type="sequence caution" evidence="2">
    <conflict type="erroneous initiation">
        <sequence resource="EMBL-CDS" id="AAU28675"/>
    </conflict>
</comment>